<gene>
    <name type="ordered locus">YLR294C</name>
    <name type="ORF">L8003.19A</name>
</gene>
<feature type="chain" id="PRO_0000299632" description="Putative uncharacterized protein YLR294C">
    <location>
        <begin position="1"/>
        <end position="109"/>
    </location>
</feature>
<feature type="transmembrane region" description="Helical" evidence="1">
    <location>
        <begin position="82"/>
        <end position="102"/>
    </location>
</feature>
<accession>O13543</accession>
<reference key="1">
    <citation type="journal article" date="1997" name="Nature">
        <title>The nucleotide sequence of Saccharomyces cerevisiae chromosome XII.</title>
        <authorList>
            <person name="Johnston M."/>
            <person name="Hillier L.W."/>
            <person name="Riles L."/>
            <person name="Albermann K."/>
            <person name="Andre B."/>
            <person name="Ansorge W."/>
            <person name="Benes V."/>
            <person name="Brueckner M."/>
            <person name="Delius H."/>
            <person name="Dubois E."/>
            <person name="Duesterhoeft A."/>
            <person name="Entian K.-D."/>
            <person name="Floeth M."/>
            <person name="Goffeau A."/>
            <person name="Hebling U."/>
            <person name="Heumann K."/>
            <person name="Heuss-Neitzel D."/>
            <person name="Hilbert H."/>
            <person name="Hilger F."/>
            <person name="Kleine K."/>
            <person name="Koetter P."/>
            <person name="Louis E.J."/>
            <person name="Messenguy F."/>
            <person name="Mewes H.-W."/>
            <person name="Miosga T."/>
            <person name="Moestl D."/>
            <person name="Mueller-Auer S."/>
            <person name="Nentwich U."/>
            <person name="Obermaier B."/>
            <person name="Piravandi E."/>
            <person name="Pohl T.M."/>
            <person name="Portetelle D."/>
            <person name="Purnelle B."/>
            <person name="Rechmann S."/>
            <person name="Rieger M."/>
            <person name="Rinke M."/>
            <person name="Rose M."/>
            <person name="Scharfe M."/>
            <person name="Scherens B."/>
            <person name="Scholler P."/>
            <person name="Schwager C."/>
            <person name="Schwarz S."/>
            <person name="Underwood A.P."/>
            <person name="Urrestarazu L.A."/>
            <person name="Vandenbol M."/>
            <person name="Verhasselt P."/>
            <person name="Vierendeels F."/>
            <person name="Voet M."/>
            <person name="Volckaert G."/>
            <person name="Voss H."/>
            <person name="Wambutt R."/>
            <person name="Wedler E."/>
            <person name="Wedler H."/>
            <person name="Zimmermann F.K."/>
            <person name="Zollner A."/>
            <person name="Hani J."/>
            <person name="Hoheisel J.D."/>
        </authorList>
    </citation>
    <scope>NUCLEOTIDE SEQUENCE [LARGE SCALE GENOMIC DNA]</scope>
    <source>
        <strain>ATCC 204508 / S288c</strain>
    </source>
</reference>
<reference key="2">
    <citation type="journal article" date="2014" name="G3 (Bethesda)">
        <title>The reference genome sequence of Saccharomyces cerevisiae: Then and now.</title>
        <authorList>
            <person name="Engel S.R."/>
            <person name="Dietrich F.S."/>
            <person name="Fisk D.G."/>
            <person name="Binkley G."/>
            <person name="Balakrishnan R."/>
            <person name="Costanzo M.C."/>
            <person name="Dwight S.S."/>
            <person name="Hitz B.C."/>
            <person name="Karra K."/>
            <person name="Nash R.S."/>
            <person name="Weng S."/>
            <person name="Wong E.D."/>
            <person name="Lloyd P."/>
            <person name="Skrzypek M.S."/>
            <person name="Miyasato S.R."/>
            <person name="Simison M."/>
            <person name="Cherry J.M."/>
        </authorList>
    </citation>
    <scope>GENOME REANNOTATION</scope>
    <source>
        <strain>ATCC 204508 / S288c</strain>
    </source>
</reference>
<reference key="3">
    <citation type="journal article" date="2007" name="Genome Res.">
        <title>Approaching a complete repository of sequence-verified protein-encoding clones for Saccharomyces cerevisiae.</title>
        <authorList>
            <person name="Hu Y."/>
            <person name="Rolfs A."/>
            <person name="Bhullar B."/>
            <person name="Murthy T.V.S."/>
            <person name="Zhu C."/>
            <person name="Berger M.F."/>
            <person name="Camargo A.A."/>
            <person name="Kelley F."/>
            <person name="McCarron S."/>
            <person name="Jepson D."/>
            <person name="Richardson A."/>
            <person name="Raphael J."/>
            <person name="Moreira D."/>
            <person name="Taycher E."/>
            <person name="Zuo D."/>
            <person name="Mohr S."/>
            <person name="Kane M.F."/>
            <person name="Williamson J."/>
            <person name="Simpson A.J.G."/>
            <person name="Bulyk M.L."/>
            <person name="Harlow E."/>
            <person name="Marsischky G."/>
            <person name="Kolodner R.D."/>
            <person name="LaBaer J."/>
        </authorList>
    </citation>
    <scope>NUCLEOTIDE SEQUENCE [GENOMIC DNA]</scope>
    <source>
        <strain>ATCC 204508 / S288c</strain>
    </source>
</reference>
<sequence>MMLRKPKKVIELFIASSLSKKKQTEPQAEQDHYFWLSSSHLFIFESSTIKKKQNTLRTLCNQPHKMQNLFFKQKIQLYIDTSLSFLLLLFFYFNNYYFLSMTYASLVNK</sequence>
<name>YL294_YEAST</name>
<evidence type="ECO:0000255" key="1"/>
<evidence type="ECO:0000305" key="2"/>
<evidence type="ECO:0000305" key="3">
    <source>
    </source>
</evidence>
<proteinExistence type="uncertain"/>
<comment type="subcellular location">
    <subcellularLocation>
        <location evidence="2">Membrane</location>
        <topology evidence="2">Single-pass membrane protein</topology>
    </subcellularLocation>
</comment>
<comment type="miscellaneous">
    <text evidence="2">Partially overlaps ATP14.</text>
</comment>
<comment type="caution">
    <text evidence="3">Product of a dubious gene prediction unlikely to encode a functional protein. Because of that it is not part of the S.cerevisiae S288c complete/reference proteome set.</text>
</comment>
<dbReference type="EMBL" id="U17243">
    <property type="protein sequence ID" value="AAB67352.1"/>
    <property type="molecule type" value="Genomic_DNA"/>
</dbReference>
<dbReference type="EMBL" id="AY558218">
    <property type="protein sequence ID" value="AAS56544.1"/>
    <property type="molecule type" value="Genomic_DNA"/>
</dbReference>
<dbReference type="PIR" id="S69307">
    <property type="entry name" value="S69307"/>
</dbReference>
<dbReference type="DIP" id="DIP-1544N"/>
<dbReference type="IntAct" id="O13543">
    <property type="interactions" value="1"/>
</dbReference>
<dbReference type="MINT" id="O13543"/>
<dbReference type="STRING" id="4932.YLR294C"/>
<dbReference type="PaxDb" id="4932-YLR294C"/>
<dbReference type="EnsemblFungi" id="YLR294C_mRNA">
    <property type="protein sequence ID" value="YLR294C"/>
    <property type="gene ID" value="YLR294C"/>
</dbReference>
<dbReference type="AGR" id="SGD:S000004285"/>
<dbReference type="SGD" id="S000004285">
    <property type="gene designation" value="YLR294C"/>
</dbReference>
<dbReference type="HOGENOM" id="CLU_2186032_0_0_1"/>
<dbReference type="GO" id="GO:0016020">
    <property type="term" value="C:membrane"/>
    <property type="evidence" value="ECO:0007669"/>
    <property type="project" value="UniProtKB-SubCell"/>
</dbReference>
<dbReference type="GO" id="GO:0045333">
    <property type="term" value="P:cellular respiration"/>
    <property type="evidence" value="ECO:0000270"/>
    <property type="project" value="SGD"/>
</dbReference>
<organism>
    <name type="scientific">Saccharomyces cerevisiae (strain ATCC 204508 / S288c)</name>
    <name type="common">Baker's yeast</name>
    <dbReference type="NCBI Taxonomy" id="559292"/>
    <lineage>
        <taxon>Eukaryota</taxon>
        <taxon>Fungi</taxon>
        <taxon>Dikarya</taxon>
        <taxon>Ascomycota</taxon>
        <taxon>Saccharomycotina</taxon>
        <taxon>Saccharomycetes</taxon>
        <taxon>Saccharomycetales</taxon>
        <taxon>Saccharomycetaceae</taxon>
        <taxon>Saccharomyces</taxon>
    </lineage>
</organism>
<keyword id="KW-0472">Membrane</keyword>
<keyword id="KW-0812">Transmembrane</keyword>
<keyword id="KW-1133">Transmembrane helix</keyword>
<protein>
    <recommendedName>
        <fullName>Putative uncharacterized protein YLR294C</fullName>
    </recommendedName>
</protein>